<reference key="1">
    <citation type="journal article" date="2003" name="Antimicrob. Agents Chemother.">
        <title>Deciphering tuberactinomycin biosynthesis: isolation, sequencing, and annotation of the viomycin biosynthetic gene cluster.</title>
        <authorList>
            <person name="Thomas M.G."/>
            <person name="Chan Y.A."/>
            <person name="Ozanick S.G."/>
        </authorList>
    </citation>
    <scope>NUCLEOTIDE SEQUENCE [GENOMIC DNA]</scope>
    <source>
        <strain>ATCC 11861</strain>
    </source>
</reference>
<reference key="2">
    <citation type="journal article" date="2004" name="ChemBioChem">
        <title>VioC is a non-heme iron, alpha-ketoglutarate-dependent oxygenase that catalyzes the formation of 3S-hydroxy-L-arginine during viomycin biosynthesis.</title>
        <authorList>
            <person name="Yin X."/>
            <person name="Zabriskie T.M."/>
        </authorList>
    </citation>
    <scope>FUNCTION</scope>
    <scope>CATALYTIC ACTIVITY</scope>
</reference>
<reference key="3">
    <citation type="journal article" date="2004" name="ChemBioChem">
        <title>Conversion of (2S)-arginine to (2S,3R)-capreomycidine by VioC and VioD from the viomycin biosynthetic pathway of Streptomyces sp. strain ATCC 11861.</title>
        <authorList>
            <person name="Ju J."/>
            <person name="Ozanick S.G."/>
            <person name="Shen B."/>
            <person name="Thomas M.G."/>
        </authorList>
    </citation>
    <scope>FUNCTION</scope>
    <scope>CATALYTIC ACTIVITY</scope>
    <source>
        <strain>ATCC 11861</strain>
    </source>
</reference>
<reference key="4">
    <citation type="journal article" date="2009" name="FEBS J.">
        <title>Structural basis for the erythro-stereospecificity of the L-arginine oxygenase VioC in viomycin biosynthesis.</title>
        <authorList>
            <person name="Helmetag V."/>
            <person name="Samel S.A."/>
            <person name="Thomas M.G."/>
            <person name="Marahiel M.A."/>
            <person name="Essen L.O."/>
        </authorList>
    </citation>
    <scope>X-RAY CRYSTALLOGRAPHY (1.10 ANGSTROMS) IN COMPLEX WITH SUBSTRATE ANALOGS AND IRON ION</scope>
    <scope>FUNCTION</scope>
    <scope>CATALYTIC ACTIVITY</scope>
    <scope>COFACTOR</scope>
    <scope>BIOPHYSICOCHEMICAL PROPERTIES</scope>
    <scope>SUBSTRATE SPECIFICITY</scope>
</reference>
<dbReference type="EC" id="1.14.11.41"/>
<dbReference type="EMBL" id="AY263398">
    <property type="protein sequence ID" value="AAP92493.1"/>
    <property type="molecule type" value="Genomic_DNA"/>
</dbReference>
<dbReference type="RefSeq" id="WP_051702361.1">
    <property type="nucleotide sequence ID" value="NZ_JNYP01000012.1"/>
</dbReference>
<dbReference type="PDB" id="2WBO">
    <property type="method" value="X-ray"/>
    <property type="resolution" value="1.30 A"/>
    <property type="chains" value="A=1-358"/>
</dbReference>
<dbReference type="PDB" id="2WBP">
    <property type="method" value="X-ray"/>
    <property type="resolution" value="1.16 A"/>
    <property type="chains" value="A=1-358"/>
</dbReference>
<dbReference type="PDB" id="2WBQ">
    <property type="method" value="X-ray"/>
    <property type="resolution" value="1.10 A"/>
    <property type="chains" value="A=1-358"/>
</dbReference>
<dbReference type="PDB" id="6ALM">
    <property type="method" value="X-ray"/>
    <property type="resolution" value="1.60 A"/>
    <property type="chains" value="A=1-358"/>
</dbReference>
<dbReference type="PDB" id="6ALN">
    <property type="method" value="X-ray"/>
    <property type="resolution" value="1.80 A"/>
    <property type="chains" value="A=1-358"/>
</dbReference>
<dbReference type="PDB" id="6ALO">
    <property type="method" value="X-ray"/>
    <property type="resolution" value="1.79 A"/>
    <property type="chains" value="A=1-358"/>
</dbReference>
<dbReference type="PDB" id="6ALP">
    <property type="method" value="X-ray"/>
    <property type="resolution" value="1.99 A"/>
    <property type="chains" value="A=1-358"/>
</dbReference>
<dbReference type="PDB" id="6ALQ">
    <property type="method" value="X-ray"/>
    <property type="resolution" value="1.67 A"/>
    <property type="chains" value="A=1-358"/>
</dbReference>
<dbReference type="PDB" id="6ALR">
    <property type="method" value="X-ray"/>
    <property type="resolution" value="1.55 A"/>
    <property type="chains" value="A=1-358"/>
</dbReference>
<dbReference type="PDB" id="6DAX">
    <property type="method" value="X-ray"/>
    <property type="resolution" value="1.70 A"/>
    <property type="chains" value="A=21-358"/>
</dbReference>
<dbReference type="PDB" id="6DAZ">
    <property type="method" value="X-ray"/>
    <property type="resolution" value="1.94 A"/>
    <property type="chains" value="A=23-358"/>
</dbReference>
<dbReference type="PDB" id="6DB2">
    <property type="method" value="X-ray"/>
    <property type="resolution" value="1.70 A"/>
    <property type="chains" value="A=23-358"/>
</dbReference>
<dbReference type="PDB" id="6MP8">
    <property type="method" value="X-ray"/>
    <property type="resolution" value="1.89 A"/>
    <property type="chains" value="A=21-358"/>
</dbReference>
<dbReference type="PDB" id="6MP9">
    <property type="method" value="X-ray"/>
    <property type="resolution" value="1.89 A"/>
    <property type="chains" value="A=22-358"/>
</dbReference>
<dbReference type="PDB" id="6Y0N">
    <property type="method" value="X-ray"/>
    <property type="resolution" value="1.86 A"/>
    <property type="chains" value="A=1-358"/>
</dbReference>
<dbReference type="PDB" id="6Y12">
    <property type="method" value="X-ray"/>
    <property type="resolution" value="1.70 A"/>
    <property type="chains" value="A=1-358"/>
</dbReference>
<dbReference type="PDB" id="9EQF">
    <property type="method" value="X-ray"/>
    <property type="resolution" value="1.60 A"/>
    <property type="chains" value="A=1-358"/>
</dbReference>
<dbReference type="PDBsum" id="2WBO"/>
<dbReference type="PDBsum" id="2WBP"/>
<dbReference type="PDBsum" id="2WBQ"/>
<dbReference type="PDBsum" id="6ALM"/>
<dbReference type="PDBsum" id="6ALN"/>
<dbReference type="PDBsum" id="6ALO"/>
<dbReference type="PDBsum" id="6ALP"/>
<dbReference type="PDBsum" id="6ALQ"/>
<dbReference type="PDBsum" id="6ALR"/>
<dbReference type="PDBsum" id="6DAX"/>
<dbReference type="PDBsum" id="6DAZ"/>
<dbReference type="PDBsum" id="6DB2"/>
<dbReference type="PDBsum" id="6MP8"/>
<dbReference type="PDBsum" id="6MP9"/>
<dbReference type="PDBsum" id="6Y0N"/>
<dbReference type="PDBsum" id="6Y12"/>
<dbReference type="PDBsum" id="9EQF"/>
<dbReference type="SMR" id="Q6WZB0"/>
<dbReference type="KEGG" id="ag:AAP92493"/>
<dbReference type="BRENDA" id="1.14.11.41">
    <property type="organism ID" value="6110"/>
</dbReference>
<dbReference type="EvolutionaryTrace" id="Q6WZB0"/>
<dbReference type="GO" id="GO:0016020">
    <property type="term" value="C:membrane"/>
    <property type="evidence" value="ECO:0007669"/>
    <property type="project" value="UniProtKB-SubCell"/>
</dbReference>
<dbReference type="GO" id="GO:0102525">
    <property type="term" value="F:2-oxoglutarate, L-arginine oxygenase (succinate-forming) activity"/>
    <property type="evidence" value="ECO:0007669"/>
    <property type="project" value="UniProtKB-EC"/>
</dbReference>
<dbReference type="GO" id="GO:0016706">
    <property type="term" value="F:2-oxoglutarate-dependent dioxygenase activity"/>
    <property type="evidence" value="ECO:0000314"/>
    <property type="project" value="UniProtKB"/>
</dbReference>
<dbReference type="GO" id="GO:0005506">
    <property type="term" value="F:iron ion binding"/>
    <property type="evidence" value="ECO:0007669"/>
    <property type="project" value="InterPro"/>
</dbReference>
<dbReference type="GO" id="GO:0017000">
    <property type="term" value="P:antibiotic biosynthetic process"/>
    <property type="evidence" value="ECO:0000314"/>
    <property type="project" value="UniProtKB"/>
</dbReference>
<dbReference type="FunFam" id="3.60.130.10:FF:000013">
    <property type="entry name" value="Alpha-ketoglutarate-dependent L-arginine hydroxylase"/>
    <property type="match status" value="1"/>
</dbReference>
<dbReference type="Gene3D" id="3.60.130.10">
    <property type="entry name" value="Clavaminate synthase-like"/>
    <property type="match status" value="1"/>
</dbReference>
<dbReference type="InterPro" id="IPR053447">
    <property type="entry name" value="Alpha-KG_dependent_hydroxylase"/>
</dbReference>
<dbReference type="InterPro" id="IPR023966">
    <property type="entry name" value="Arginine_beta-hydroxylase"/>
</dbReference>
<dbReference type="InterPro" id="IPR014503">
    <property type="entry name" value="Clavaminate_syn-like"/>
</dbReference>
<dbReference type="InterPro" id="IPR042098">
    <property type="entry name" value="TauD-like_sf"/>
</dbReference>
<dbReference type="InterPro" id="IPR003819">
    <property type="entry name" value="TauD/TfdA-like"/>
</dbReference>
<dbReference type="NCBIfam" id="NF041363">
    <property type="entry name" value="GntD_guanitoxin"/>
    <property type="match status" value="1"/>
</dbReference>
<dbReference type="NCBIfam" id="TIGR03946">
    <property type="entry name" value="viomycin_VioC"/>
    <property type="match status" value="1"/>
</dbReference>
<dbReference type="Pfam" id="PF02668">
    <property type="entry name" value="TauD"/>
    <property type="match status" value="1"/>
</dbReference>
<dbReference type="PIRSF" id="PIRSF019543">
    <property type="entry name" value="Clavaminate_syn"/>
    <property type="match status" value="1"/>
</dbReference>
<dbReference type="SUPFAM" id="SSF51197">
    <property type="entry name" value="Clavaminate synthase-like"/>
    <property type="match status" value="1"/>
</dbReference>
<evidence type="ECO:0000255" key="1"/>
<evidence type="ECO:0000256" key="2">
    <source>
        <dbReference type="SAM" id="MobiDB-lite"/>
    </source>
</evidence>
<evidence type="ECO:0000269" key="3">
    <source>
    </source>
</evidence>
<evidence type="ECO:0000269" key="4">
    <source>
    </source>
</evidence>
<evidence type="ECO:0000269" key="5">
    <source>
    </source>
</evidence>
<evidence type="ECO:0000305" key="6"/>
<evidence type="ECO:0007829" key="7">
    <source>
        <dbReference type="PDB" id="2WBO"/>
    </source>
</evidence>
<evidence type="ECO:0007829" key="8">
    <source>
        <dbReference type="PDB" id="2WBQ"/>
    </source>
</evidence>
<evidence type="ECO:0007829" key="9">
    <source>
        <dbReference type="PDB" id="6DAZ"/>
    </source>
</evidence>
<accession>Q6WZB0</accession>
<organism>
    <name type="scientific">Streptomyces vinaceus</name>
    <dbReference type="NCBI Taxonomy" id="1960"/>
    <lineage>
        <taxon>Bacteria</taxon>
        <taxon>Bacillati</taxon>
        <taxon>Actinomycetota</taxon>
        <taxon>Actinomycetes</taxon>
        <taxon>Kitasatosporales</taxon>
        <taxon>Streptomycetaceae</taxon>
        <taxon>Streptomyces</taxon>
    </lineage>
</organism>
<sequence>MTESPTTHHGAAPPDSVATPVRPWSEFRLTPAEAAAAAALAARCAQRYDETDGPEFLLDAPVIAHELPRRLRTFMARARLDAWPHALVVRGNPVDDAALGSTPVHWRTARTPGSRPLSFLLMLYAGLLGDVFGWATQQDGRVVTDVLPIKGGEHTLVSSSSRQELGWHTEDAFSPYRADYVGLLSLRNPDGVATTLAGVPLDDLDERTLDVLFQERFLIRPDDSHLQVNNSTAQQGRVEFEGIAQAADRPEPVAILTGHRAAPHLRVDGDFSAPAEGDEEAAAALGTLRKLIDASLYELVLDQGDVAFIDNRRAVHGRRAFQPRYDGRDRWLKRINITRDLHRSRKAWAGDSRVLGQR</sequence>
<proteinExistence type="evidence at protein level"/>
<protein>
    <recommendedName>
        <fullName>Alpha-ketoglutarate-dependent L-arginine hydroxylase</fullName>
        <ecNumber>1.14.11.41</ecNumber>
    </recommendedName>
    <alternativeName>
        <fullName>Viomycin biosynthesis protein C</fullName>
    </alternativeName>
</protein>
<gene>
    <name type="primary">vioC</name>
</gene>
<keyword id="KW-0002">3D-structure</keyword>
<keyword id="KW-0045">Antibiotic biosynthesis</keyword>
<keyword id="KW-0408">Iron</keyword>
<keyword id="KW-0472">Membrane</keyword>
<keyword id="KW-0479">Metal-binding</keyword>
<keyword id="KW-0560">Oxidoreductase</keyword>
<keyword id="KW-0812">Transmembrane</keyword>
<keyword id="KW-1133">Transmembrane helix</keyword>
<comment type="function">
    <text evidence="3 4 5">Involved in the biosynthesis of capreomycidine, an unusual amino acid used by non-ribosomal peptide synthases (NRPS) to make the tuberactinomycin class of peptide antibiotics such as viomycin and capreomycin. Catalyzes the stereospecific hydroxylation of the C3 of (2S)-arginine to generate (3S)-hydroxy-(2S)-arginine. Usually clavaminic acid synthase-like oxygenases catalyze the formation of threo diastereomers, however VioC produces the erythro diastereomer of beta-carbon-hydroxylated L-arginine. It exerts a broad substrate specificity by accepting the analogs L-homoarginine and L-canavanine for the beta-carbon hydroxylation.</text>
</comment>
<comment type="catalytic activity">
    <reaction evidence="3 4 5">
        <text>L-arginine + 2-oxoglutarate + O2 = (2S,3S)-hydroxyarginine + succinate + CO2</text>
        <dbReference type="Rhea" id="RHEA:36607"/>
        <dbReference type="ChEBI" id="CHEBI:15379"/>
        <dbReference type="ChEBI" id="CHEBI:16526"/>
        <dbReference type="ChEBI" id="CHEBI:16810"/>
        <dbReference type="ChEBI" id="CHEBI:30031"/>
        <dbReference type="ChEBI" id="CHEBI:32682"/>
        <dbReference type="ChEBI" id="CHEBI:73938"/>
        <dbReference type="EC" id="1.14.11.41"/>
    </reaction>
</comment>
<comment type="cofactor">
    <cofactor evidence="5">
        <name>Fe cation</name>
        <dbReference type="ChEBI" id="CHEBI:24875"/>
    </cofactor>
</comment>
<comment type="biophysicochemical properties">
    <kinetics>
        <KM evidence="5">1.16 mM for L-canavanine (at pH 8 and 30 degrees Celsius)</KM>
        <KM evidence="5">3.4 mM for L-arginine (at pH 8 and 30 degrees Celsius)</KM>
        <KM evidence="5">7.05 mM for L-homoarginine (at pH 8 and 30 degrees Celsius)</KM>
        <text>kcat is 2611 min(-1), 831 min(-1) and 73.2 min(-1) for L-arginine, L-homoarginine and L-canavanine, respectively (at pH 8 and 30 degrees Celsius).</text>
    </kinetics>
</comment>
<comment type="pathway">
    <text>Antibiotic biosynthesis.</text>
</comment>
<comment type="subcellular location">
    <subcellularLocation>
        <location evidence="6">Membrane</location>
        <topology evidence="6">Single-pass membrane protein</topology>
    </subcellularLocation>
</comment>
<comment type="similarity">
    <text evidence="6">Belongs to the clavaminate synthase family.</text>
</comment>
<name>ARGHX_STRVI</name>
<feature type="chain" id="PRO_0000424865" description="Alpha-ketoglutarate-dependent L-arginine hydroxylase">
    <location>
        <begin position="1"/>
        <end position="358"/>
    </location>
</feature>
<feature type="transmembrane region" description="Helical" evidence="1">
    <location>
        <begin position="117"/>
        <end position="135"/>
    </location>
</feature>
<feature type="region of interest" description="Disordered" evidence="2">
    <location>
        <begin position="1"/>
        <end position="21"/>
    </location>
</feature>
<feature type="binding site">
    <location>
        <begin position="156"/>
        <end position="158"/>
    </location>
    <ligand>
        <name>L-arginine</name>
        <dbReference type="ChEBI" id="CHEBI:32682"/>
    </ligand>
</feature>
<feature type="binding site">
    <location>
        <position position="168"/>
    </location>
    <ligand>
        <name>Fe cation</name>
        <dbReference type="ChEBI" id="CHEBI:24875"/>
    </ligand>
</feature>
<feature type="binding site">
    <location>
        <position position="170"/>
    </location>
    <ligand>
        <name>Fe cation</name>
        <dbReference type="ChEBI" id="CHEBI:24875"/>
    </ligand>
</feature>
<feature type="binding site">
    <location>
        <position position="194"/>
    </location>
    <ligand>
        <name>2-oxoglutarate</name>
        <dbReference type="ChEBI" id="CHEBI:16810"/>
    </ligand>
</feature>
<feature type="binding site">
    <location>
        <begin position="268"/>
        <end position="270"/>
    </location>
    <ligand>
        <name>L-arginine</name>
        <dbReference type="ChEBI" id="CHEBI:32682"/>
    </ligand>
</feature>
<feature type="binding site">
    <location>
        <position position="316"/>
    </location>
    <ligand>
        <name>Fe cation</name>
        <dbReference type="ChEBI" id="CHEBI:24875"/>
    </ligand>
</feature>
<feature type="binding site">
    <location>
        <position position="330"/>
    </location>
    <ligand>
        <name>2-oxoglutarate</name>
        <dbReference type="ChEBI" id="CHEBI:16810"/>
    </ligand>
</feature>
<feature type="binding site">
    <location>
        <position position="334"/>
    </location>
    <ligand>
        <name>2-oxoglutarate</name>
        <dbReference type="ChEBI" id="CHEBI:16810"/>
    </ligand>
</feature>
<feature type="binding site">
    <location>
        <position position="334"/>
    </location>
    <ligand>
        <name>L-arginine</name>
        <dbReference type="ChEBI" id="CHEBI:32682"/>
    </ligand>
</feature>
<feature type="strand" evidence="8">
    <location>
        <begin position="23"/>
        <end position="28"/>
    </location>
</feature>
<feature type="helix" evidence="8">
    <location>
        <begin position="31"/>
        <end position="47"/>
    </location>
</feature>
<feature type="strand" evidence="9">
    <location>
        <begin position="51"/>
        <end position="53"/>
    </location>
</feature>
<feature type="helix" evidence="8">
    <location>
        <begin position="54"/>
        <end position="63"/>
    </location>
</feature>
<feature type="helix" evidence="8">
    <location>
        <begin position="64"/>
        <end position="66"/>
    </location>
</feature>
<feature type="helix" evidence="8">
    <location>
        <begin position="69"/>
        <end position="78"/>
    </location>
</feature>
<feature type="strand" evidence="8">
    <location>
        <begin position="85"/>
        <end position="90"/>
    </location>
</feature>
<feature type="helix" evidence="8">
    <location>
        <begin position="96"/>
        <end position="99"/>
    </location>
</feature>
<feature type="strand" evidence="8">
    <location>
        <begin position="104"/>
        <end position="106"/>
    </location>
</feature>
<feature type="helix" evidence="8">
    <location>
        <begin position="112"/>
        <end position="114"/>
    </location>
</feature>
<feature type="helix" evidence="8">
    <location>
        <begin position="115"/>
        <end position="126"/>
    </location>
</feature>
<feature type="strand" evidence="8">
    <location>
        <begin position="130"/>
        <end position="134"/>
    </location>
</feature>
<feature type="helix" evidence="8">
    <location>
        <begin position="138"/>
        <end position="140"/>
    </location>
</feature>
<feature type="strand" evidence="8">
    <location>
        <begin position="142"/>
        <end position="146"/>
    </location>
</feature>
<feature type="strand" evidence="8">
    <location>
        <begin position="155"/>
        <end position="157"/>
    </location>
</feature>
<feature type="strand" evidence="8">
    <location>
        <begin position="165"/>
        <end position="168"/>
    </location>
</feature>
<feature type="turn" evidence="8">
    <location>
        <begin position="170"/>
        <end position="173"/>
    </location>
</feature>
<feature type="strand" evidence="8">
    <location>
        <begin position="179"/>
        <end position="187"/>
    </location>
</feature>
<feature type="strand" evidence="8">
    <location>
        <begin position="193"/>
        <end position="198"/>
    </location>
</feature>
<feature type="turn" evidence="8">
    <location>
        <begin position="201"/>
        <end position="203"/>
    </location>
</feature>
<feature type="helix" evidence="8">
    <location>
        <begin position="206"/>
        <end position="212"/>
    </location>
</feature>
<feature type="strand" evidence="7">
    <location>
        <begin position="217"/>
        <end position="219"/>
    </location>
</feature>
<feature type="helix" evidence="8">
    <location>
        <begin position="223"/>
        <end position="225"/>
    </location>
</feature>
<feature type="helix" evidence="8">
    <location>
        <begin position="227"/>
        <end position="229"/>
    </location>
</feature>
<feature type="strand" evidence="7">
    <location>
        <begin position="232"/>
        <end position="236"/>
    </location>
</feature>
<feature type="helix" evidence="8">
    <location>
        <begin position="239"/>
        <end position="248"/>
    </location>
</feature>
<feature type="strand" evidence="8">
    <location>
        <begin position="255"/>
        <end position="259"/>
    </location>
</feature>
<feature type="strand" evidence="8">
    <location>
        <begin position="262"/>
        <end position="265"/>
    </location>
</feature>
<feature type="turn" evidence="8">
    <location>
        <begin position="269"/>
        <end position="271"/>
    </location>
</feature>
<feature type="strand" evidence="8">
    <location>
        <begin position="273"/>
        <end position="275"/>
    </location>
</feature>
<feature type="helix" evidence="8">
    <location>
        <begin position="279"/>
        <end position="295"/>
    </location>
</feature>
<feature type="strand" evidence="8">
    <location>
        <begin position="297"/>
        <end position="300"/>
    </location>
</feature>
<feature type="strand" evidence="8">
    <location>
        <begin position="306"/>
        <end position="310"/>
    </location>
</feature>
<feature type="turn" evidence="8">
    <location>
        <begin position="311"/>
        <end position="313"/>
    </location>
</feature>
<feature type="strand" evidence="8">
    <location>
        <begin position="314"/>
        <end position="318"/>
    </location>
</feature>
<feature type="strand" evidence="8">
    <location>
        <begin position="331"/>
        <end position="339"/>
    </location>
</feature>
<feature type="helix" evidence="8">
    <location>
        <begin position="341"/>
        <end position="347"/>
    </location>
</feature>
<feature type="strand" evidence="8">
    <location>
        <begin position="348"/>
        <end position="351"/>
    </location>
</feature>